<proteinExistence type="evidence at transcript level"/>
<gene>
    <name type="primary">NPF2.6</name>
    <name type="ordered locus">At3g45660</name>
    <name type="ORF">F9K21.240</name>
    <name type="ORF">T6D9.2</name>
</gene>
<dbReference type="EMBL" id="AL138657">
    <property type="protein sequence ID" value="CAB75495.1"/>
    <property type="molecule type" value="Genomic_DNA"/>
</dbReference>
<dbReference type="EMBL" id="CP002686">
    <property type="protein sequence ID" value="AEE78056.1"/>
    <property type="molecule type" value="Genomic_DNA"/>
</dbReference>
<dbReference type="EMBL" id="CP002686">
    <property type="protein sequence ID" value="ANM64024.1"/>
    <property type="molecule type" value="Genomic_DNA"/>
</dbReference>
<dbReference type="PIR" id="T47506">
    <property type="entry name" value="T47506"/>
</dbReference>
<dbReference type="RefSeq" id="NP_001319690.1">
    <property type="nucleotide sequence ID" value="NM_001339215.1"/>
</dbReference>
<dbReference type="RefSeq" id="NP_190152.1">
    <property type="nucleotide sequence ID" value="NM_114435.2"/>
</dbReference>
<dbReference type="SMR" id="Q9M1E1"/>
<dbReference type="FunCoup" id="Q9M1E1">
    <property type="interactions" value="1"/>
</dbReference>
<dbReference type="STRING" id="3702.Q9M1E1"/>
<dbReference type="iPTMnet" id="Q9M1E1"/>
<dbReference type="PaxDb" id="3702-AT3G45660.1"/>
<dbReference type="EnsemblPlants" id="AT3G45660.1">
    <property type="protein sequence ID" value="AT3G45660.1"/>
    <property type="gene ID" value="AT3G45660"/>
</dbReference>
<dbReference type="EnsemblPlants" id="AT3G45660.3">
    <property type="protein sequence ID" value="AT3G45660.3"/>
    <property type="gene ID" value="AT3G45660"/>
</dbReference>
<dbReference type="GeneID" id="823708"/>
<dbReference type="Gramene" id="AT3G45660.1">
    <property type="protein sequence ID" value="AT3G45660.1"/>
    <property type="gene ID" value="AT3G45660"/>
</dbReference>
<dbReference type="Gramene" id="AT3G45660.3">
    <property type="protein sequence ID" value="AT3G45660.3"/>
    <property type="gene ID" value="AT3G45660"/>
</dbReference>
<dbReference type="KEGG" id="ath:AT3G45660"/>
<dbReference type="Araport" id="AT3G45660"/>
<dbReference type="TAIR" id="AT3G45660"/>
<dbReference type="eggNOG" id="KOG1237">
    <property type="taxonomic scope" value="Eukaryota"/>
</dbReference>
<dbReference type="HOGENOM" id="CLU_009313_4_2_1"/>
<dbReference type="InParanoid" id="Q9M1E1"/>
<dbReference type="OrthoDB" id="8904098at2759"/>
<dbReference type="PhylomeDB" id="Q9M1E1"/>
<dbReference type="PRO" id="PR:Q9M1E1"/>
<dbReference type="Proteomes" id="UP000006548">
    <property type="component" value="Chromosome 3"/>
</dbReference>
<dbReference type="ExpressionAtlas" id="Q9M1E1">
    <property type="expression patterns" value="baseline and differential"/>
</dbReference>
<dbReference type="GO" id="GO:0016020">
    <property type="term" value="C:membrane"/>
    <property type="evidence" value="ECO:0007669"/>
    <property type="project" value="UniProtKB-SubCell"/>
</dbReference>
<dbReference type="GO" id="GO:0022857">
    <property type="term" value="F:transmembrane transporter activity"/>
    <property type="evidence" value="ECO:0007669"/>
    <property type="project" value="InterPro"/>
</dbReference>
<dbReference type="GO" id="GO:0042128">
    <property type="term" value="P:nitrate assimilation"/>
    <property type="evidence" value="ECO:0007669"/>
    <property type="project" value="UniProtKB-KW"/>
</dbReference>
<dbReference type="CDD" id="cd17416">
    <property type="entry name" value="MFS_NPF1_2"/>
    <property type="match status" value="1"/>
</dbReference>
<dbReference type="Gene3D" id="1.20.1250.20">
    <property type="entry name" value="MFS general substrate transporter like domains"/>
    <property type="match status" value="1"/>
</dbReference>
<dbReference type="InterPro" id="IPR036259">
    <property type="entry name" value="MFS_trans_sf"/>
</dbReference>
<dbReference type="InterPro" id="IPR000109">
    <property type="entry name" value="POT_fam"/>
</dbReference>
<dbReference type="PANTHER" id="PTHR11654">
    <property type="entry name" value="OLIGOPEPTIDE TRANSPORTER-RELATED"/>
    <property type="match status" value="1"/>
</dbReference>
<dbReference type="Pfam" id="PF00854">
    <property type="entry name" value="PTR2"/>
    <property type="match status" value="1"/>
</dbReference>
<dbReference type="SUPFAM" id="SSF103473">
    <property type="entry name" value="MFS general substrate transporter"/>
    <property type="match status" value="1"/>
</dbReference>
<sequence>MSGSVSRDAEALKSADSSTRRSGGRITFPFMIVTLFGLTLATLGWLQNLIVYLIEEYNMKSIAAAKILNIFSGFTFMFPAIGAIAADSFFGTIPVILVSSFISLVGVVLLALTTLFDSLRPQACETASKLCQAPTNIQLGVLYTAITLGCVGAGGLRFTLATAGANQYEKTKDQGSFFNWFFFTWYLAASISATAIVYAEENISWSFGFGLCVAANLLGLIVFISGKKFYKHDKPLGSPFTSLLRVIFAAIRKRKAVVSTNEKDYHSESKKTPTKSFRFFNRAALKQDDEVNSDGTIHNQWRLCSVQQVEDFKAVIRIIPLVLAILFLSTPIAMQLGLTVLQGLVMDRRLGPHFKIPAGSLQVITLLSTCLFIIVNDRFLYPFYQKLTGKFPTPIQRVGIGHVFNILSMAVTAIVEAKRLKIVQKGHFLGSSSVADMSVLWLFPPLVIVGIGEAFHFPGNVALCYQEFPESMRSTATSITSVLIGICFYTSTALIDLIQKTTAWLPDDINHGRVDNVYWILVIGGVLNLGYFLVCSWFYKYRNLENADHEQDANVSH</sequence>
<reference key="1">
    <citation type="journal article" date="2000" name="Nature">
        <title>Sequence and analysis of chromosome 3 of the plant Arabidopsis thaliana.</title>
        <authorList>
            <person name="Salanoubat M."/>
            <person name="Lemcke K."/>
            <person name="Rieger M."/>
            <person name="Ansorge W."/>
            <person name="Unseld M."/>
            <person name="Fartmann B."/>
            <person name="Valle G."/>
            <person name="Bloecker H."/>
            <person name="Perez-Alonso M."/>
            <person name="Obermaier B."/>
            <person name="Delseny M."/>
            <person name="Boutry M."/>
            <person name="Grivell L.A."/>
            <person name="Mache R."/>
            <person name="Puigdomenech P."/>
            <person name="De Simone V."/>
            <person name="Choisne N."/>
            <person name="Artiguenave F."/>
            <person name="Robert C."/>
            <person name="Brottier P."/>
            <person name="Wincker P."/>
            <person name="Cattolico L."/>
            <person name="Weissenbach J."/>
            <person name="Saurin W."/>
            <person name="Quetier F."/>
            <person name="Schaefer M."/>
            <person name="Mueller-Auer S."/>
            <person name="Gabel C."/>
            <person name="Fuchs M."/>
            <person name="Benes V."/>
            <person name="Wurmbach E."/>
            <person name="Drzonek H."/>
            <person name="Erfle H."/>
            <person name="Jordan N."/>
            <person name="Bangert S."/>
            <person name="Wiedelmann R."/>
            <person name="Kranz H."/>
            <person name="Voss H."/>
            <person name="Holland R."/>
            <person name="Brandt P."/>
            <person name="Nyakatura G."/>
            <person name="Vezzi A."/>
            <person name="D'Angelo M."/>
            <person name="Pallavicini A."/>
            <person name="Toppo S."/>
            <person name="Simionati B."/>
            <person name="Conrad A."/>
            <person name="Hornischer K."/>
            <person name="Kauer G."/>
            <person name="Loehnert T.-H."/>
            <person name="Nordsiek G."/>
            <person name="Reichelt J."/>
            <person name="Scharfe M."/>
            <person name="Schoen O."/>
            <person name="Bargues M."/>
            <person name="Terol J."/>
            <person name="Climent J."/>
            <person name="Navarro P."/>
            <person name="Collado C."/>
            <person name="Perez-Perez A."/>
            <person name="Ottenwaelder B."/>
            <person name="Duchemin D."/>
            <person name="Cooke R."/>
            <person name="Laudie M."/>
            <person name="Berger-Llauro C."/>
            <person name="Purnelle B."/>
            <person name="Masuy D."/>
            <person name="de Haan M."/>
            <person name="Maarse A.C."/>
            <person name="Alcaraz J.-P."/>
            <person name="Cottet A."/>
            <person name="Casacuberta E."/>
            <person name="Monfort A."/>
            <person name="Argiriou A."/>
            <person name="Flores M."/>
            <person name="Liguori R."/>
            <person name="Vitale D."/>
            <person name="Mannhaupt G."/>
            <person name="Haase D."/>
            <person name="Schoof H."/>
            <person name="Rudd S."/>
            <person name="Zaccaria P."/>
            <person name="Mewes H.-W."/>
            <person name="Mayer K.F.X."/>
            <person name="Kaul S."/>
            <person name="Town C.D."/>
            <person name="Koo H.L."/>
            <person name="Tallon L.J."/>
            <person name="Jenkins J."/>
            <person name="Rooney T."/>
            <person name="Rizzo M."/>
            <person name="Walts A."/>
            <person name="Utterback T."/>
            <person name="Fujii C.Y."/>
            <person name="Shea T.P."/>
            <person name="Creasy T.H."/>
            <person name="Haas B."/>
            <person name="Maiti R."/>
            <person name="Wu D."/>
            <person name="Peterson J."/>
            <person name="Van Aken S."/>
            <person name="Pai G."/>
            <person name="Militscher J."/>
            <person name="Sellers P."/>
            <person name="Gill J.E."/>
            <person name="Feldblyum T.V."/>
            <person name="Preuss D."/>
            <person name="Lin X."/>
            <person name="Nierman W.C."/>
            <person name="Salzberg S.L."/>
            <person name="White O."/>
            <person name="Venter J.C."/>
            <person name="Fraser C.M."/>
            <person name="Kaneko T."/>
            <person name="Nakamura Y."/>
            <person name="Sato S."/>
            <person name="Kato T."/>
            <person name="Asamizu E."/>
            <person name="Sasamoto S."/>
            <person name="Kimura T."/>
            <person name="Idesawa K."/>
            <person name="Kawashima K."/>
            <person name="Kishida Y."/>
            <person name="Kiyokawa C."/>
            <person name="Kohara M."/>
            <person name="Matsumoto M."/>
            <person name="Matsuno A."/>
            <person name="Muraki A."/>
            <person name="Nakayama S."/>
            <person name="Nakazaki N."/>
            <person name="Shinpo S."/>
            <person name="Takeuchi C."/>
            <person name="Wada T."/>
            <person name="Watanabe A."/>
            <person name="Yamada M."/>
            <person name="Yasuda M."/>
            <person name="Tabata S."/>
        </authorList>
    </citation>
    <scope>NUCLEOTIDE SEQUENCE [LARGE SCALE GENOMIC DNA]</scope>
    <source>
        <strain>cv. Columbia</strain>
    </source>
</reference>
<reference key="2">
    <citation type="journal article" date="2017" name="Plant J.">
        <title>Araport11: a complete reannotation of the Arabidopsis thaliana reference genome.</title>
        <authorList>
            <person name="Cheng C.Y."/>
            <person name="Krishnakumar V."/>
            <person name="Chan A.P."/>
            <person name="Thibaud-Nissen F."/>
            <person name="Schobel S."/>
            <person name="Town C.D."/>
        </authorList>
    </citation>
    <scope>GENOME REANNOTATION</scope>
    <source>
        <strain>cv. Columbia</strain>
    </source>
</reference>
<reference key="3">
    <citation type="journal article" date="2007" name="FEBS Lett.">
        <title>Nitrate transporters and peptide transporters.</title>
        <authorList>
            <person name="Tsay Y.F."/>
            <person name="Chiu C.C."/>
            <person name="Tsai C.B."/>
            <person name="Ho C.H."/>
            <person name="Hsu P.K."/>
        </authorList>
    </citation>
    <scope>TISSUE SPECIFICITY</scope>
    <scope>GENE FAMILY</scope>
</reference>
<reference key="4">
    <citation type="journal article" date="2007" name="Plant Cell">
        <title>Nitrate efflux at the root plasma membrane: identification of an Arabidopsis excretion transporter.</title>
        <authorList>
            <person name="Segonzac C."/>
            <person name="Boyer J.C."/>
            <person name="Ipotesi E."/>
            <person name="Szponarski W."/>
            <person name="Tillard P."/>
            <person name="Touraine B."/>
            <person name="Sommerer N."/>
            <person name="Rossignol M."/>
            <person name="Gibrat R."/>
        </authorList>
    </citation>
    <scope>IDENTIFICATION</scope>
</reference>
<reference key="5">
    <citation type="journal article" date="2010" name="Plant Cell">
        <title>The Arabidopsis nitrate transporter NRT1.8 functions in nitrate removal from the xylem sap and mediates cadmium tolerance.</title>
        <authorList>
            <person name="Li J.Y."/>
            <person name="Fu Y.L."/>
            <person name="Pike S.M."/>
            <person name="Bao J."/>
            <person name="Tian W."/>
            <person name="Zhang Y."/>
            <person name="Chen C.Z."/>
            <person name="Zhang Y."/>
            <person name="Li H.M."/>
            <person name="Huang J."/>
            <person name="Li L.G."/>
            <person name="Schroeder J.I."/>
            <person name="Gassmann W."/>
            <person name="Gong J.M."/>
        </authorList>
    </citation>
    <scope>GENE FAMILY</scope>
</reference>
<reference key="6">
    <citation type="journal article" date="2014" name="Trends Plant Sci.">
        <title>A unified nomenclature of NITRATE TRANSPORTER 1/PEPTIDE TRANSPORTER family members in plants.</title>
        <authorList>
            <person name="Leran S."/>
            <person name="Varala K."/>
            <person name="Boyer J.C."/>
            <person name="Chiurazzi M."/>
            <person name="Crawford N."/>
            <person name="Daniel-Vedele F."/>
            <person name="David L."/>
            <person name="Dickstein R."/>
            <person name="Fernandez E."/>
            <person name="Forde B."/>
            <person name="Gassmann W."/>
            <person name="Geiger D."/>
            <person name="Gojon A."/>
            <person name="Gong J.M."/>
            <person name="Halkier B.A."/>
            <person name="Harris J.M."/>
            <person name="Hedrich R."/>
            <person name="Limami A.M."/>
            <person name="Rentsch D."/>
            <person name="Seo M."/>
            <person name="Tsay Y.F."/>
            <person name="Zhang M."/>
            <person name="Coruzzi G."/>
            <person name="Lacombe B."/>
        </authorList>
    </citation>
    <scope>GENE FAMILY</scope>
    <scope>NOMENCLATURE</scope>
</reference>
<evidence type="ECO:0000250" key="1"/>
<evidence type="ECO:0000255" key="2"/>
<evidence type="ECO:0000269" key="3">
    <source>
    </source>
</evidence>
<evidence type="ECO:0000305" key="4"/>
<accession>Q9M1E1</accession>
<protein>
    <recommendedName>
        <fullName>Protein NRT1/ PTR FAMILY 2.6</fullName>
        <shortName>AtNPF2.6</shortName>
    </recommendedName>
    <alternativeName>
        <fullName>Probable nitrate excretion transporter 2</fullName>
    </alternativeName>
    <alternativeName>
        <fullName>Protein NAXT1-like 1</fullName>
    </alternativeName>
</protein>
<keyword id="KW-0472">Membrane</keyword>
<keyword id="KW-0534">Nitrate assimilation</keyword>
<keyword id="KW-1185">Reference proteome</keyword>
<keyword id="KW-0812">Transmembrane</keyword>
<keyword id="KW-1133">Transmembrane helix</keyword>
<keyword id="KW-0813">Transport</keyword>
<organism>
    <name type="scientific">Arabidopsis thaliana</name>
    <name type="common">Mouse-ear cress</name>
    <dbReference type="NCBI Taxonomy" id="3702"/>
    <lineage>
        <taxon>Eukaryota</taxon>
        <taxon>Viridiplantae</taxon>
        <taxon>Streptophyta</taxon>
        <taxon>Embryophyta</taxon>
        <taxon>Tracheophyta</taxon>
        <taxon>Spermatophyta</taxon>
        <taxon>Magnoliopsida</taxon>
        <taxon>eudicotyledons</taxon>
        <taxon>Gunneridae</taxon>
        <taxon>Pentapetalae</taxon>
        <taxon>rosids</taxon>
        <taxon>malvids</taxon>
        <taxon>Brassicales</taxon>
        <taxon>Brassicaceae</taxon>
        <taxon>Camelineae</taxon>
        <taxon>Arabidopsis</taxon>
    </lineage>
</organism>
<name>PTR38_ARATH</name>
<comment type="function">
    <text evidence="1">Transporter involved in a passive nitrate efflux.</text>
</comment>
<comment type="subcellular location">
    <subcellularLocation>
        <location evidence="1">Membrane</location>
        <topology evidence="1">Multi-pass membrane protein</topology>
    </subcellularLocation>
</comment>
<comment type="tissue specificity">
    <text evidence="3">Expressed in roots.</text>
</comment>
<comment type="similarity">
    <text evidence="4">Belongs to the major facilitator superfamily. Proton-dependent oligopeptide transporter (POT/PTR) (TC 2.A.17) family.</text>
</comment>
<feature type="chain" id="PRO_0000399972" description="Protein NRT1/ PTR FAMILY 2.6">
    <location>
        <begin position="1"/>
        <end position="557"/>
    </location>
</feature>
<feature type="transmembrane region" description="Helical" evidence="2">
    <location>
        <begin position="26"/>
        <end position="46"/>
    </location>
</feature>
<feature type="transmembrane region" description="Helical" evidence="2">
    <location>
        <begin position="67"/>
        <end position="87"/>
    </location>
</feature>
<feature type="transmembrane region" description="Helical" evidence="2">
    <location>
        <begin position="89"/>
        <end position="109"/>
    </location>
</feature>
<feature type="transmembrane region" description="Helical" evidence="2">
    <location>
        <begin position="136"/>
        <end position="156"/>
    </location>
</feature>
<feature type="transmembrane region" description="Helical" evidence="2">
    <location>
        <begin position="177"/>
        <end position="197"/>
    </location>
</feature>
<feature type="transmembrane region" description="Helical" evidence="2">
    <location>
        <begin position="203"/>
        <end position="223"/>
    </location>
</feature>
<feature type="transmembrane region" description="Helical" evidence="2">
    <location>
        <begin position="318"/>
        <end position="338"/>
    </location>
</feature>
<feature type="transmembrane region" description="Helical" evidence="2">
    <location>
        <begin position="356"/>
        <end position="376"/>
    </location>
</feature>
<feature type="transmembrane region" description="Helical" evidence="2">
    <location>
        <begin position="398"/>
        <end position="418"/>
    </location>
</feature>
<feature type="transmembrane region" description="Helical" evidence="2">
    <location>
        <begin position="439"/>
        <end position="459"/>
    </location>
</feature>
<feature type="transmembrane region" description="Helical" evidence="2">
    <location>
        <begin position="478"/>
        <end position="498"/>
    </location>
</feature>
<feature type="transmembrane region" description="Helical" evidence="2">
    <location>
        <begin position="518"/>
        <end position="538"/>
    </location>
</feature>